<gene>
    <name evidence="1" type="primary">rlmH</name>
    <name type="ordered locus">HPAG1_0933</name>
</gene>
<name>RLMH_HELPH</name>
<evidence type="ECO:0000255" key="1">
    <source>
        <dbReference type="HAMAP-Rule" id="MF_00658"/>
    </source>
</evidence>
<reference key="1">
    <citation type="journal article" date="2006" name="Proc. Natl. Acad. Sci. U.S.A.">
        <title>The complete genome sequence of a chronic atrophic gastritis Helicobacter pylori strain: evolution during disease progression.</title>
        <authorList>
            <person name="Oh J.D."/>
            <person name="Kling-Baeckhed H."/>
            <person name="Giannakis M."/>
            <person name="Xu J."/>
            <person name="Fulton R.S."/>
            <person name="Fulton L.A."/>
            <person name="Cordum H.S."/>
            <person name="Wang C."/>
            <person name="Elliott G."/>
            <person name="Edwards J."/>
            <person name="Mardis E.R."/>
            <person name="Engstrand L.G."/>
            <person name="Gordon J.I."/>
        </authorList>
    </citation>
    <scope>NUCLEOTIDE SEQUENCE [LARGE SCALE GENOMIC DNA]</scope>
    <source>
        <strain>HPAG1</strain>
    </source>
</reference>
<accession>Q1CSS2</accession>
<protein>
    <recommendedName>
        <fullName evidence="1">Ribosomal RNA large subunit methyltransferase H</fullName>
        <ecNumber evidence="1">2.1.1.177</ecNumber>
    </recommendedName>
    <alternativeName>
        <fullName evidence="1">23S rRNA (pseudouridine1915-N3)-methyltransferase</fullName>
    </alternativeName>
    <alternativeName>
        <fullName evidence="1">23S rRNA m3Psi1915 methyltransferase</fullName>
    </alternativeName>
    <alternativeName>
        <fullName evidence="1">rRNA (pseudouridine-N3-)-methyltransferase RlmH</fullName>
    </alternativeName>
</protein>
<sequence length="150" mass="17322">MRCVVYSIAKSSPLELVKIYQKQCRQFDCELELVDLFPKNTANAQKISKEFAQKSYSLAFEPYLNPKAKNIALHPKAQRGDSFAFSKMLENHLNINFFIAGAYGFEENFLKGCQAWSLSEMTFSHEVAKIVLCEQIYRALSIIFKHPYHK</sequence>
<dbReference type="EC" id="2.1.1.177" evidence="1"/>
<dbReference type="EMBL" id="CP000241">
    <property type="protein sequence ID" value="ABF85000.1"/>
    <property type="molecule type" value="Genomic_DNA"/>
</dbReference>
<dbReference type="RefSeq" id="WP_001203884.1">
    <property type="nucleotide sequence ID" value="NC_008086.1"/>
</dbReference>
<dbReference type="SMR" id="Q1CSS2"/>
<dbReference type="KEGG" id="hpa:HPAG1_0933"/>
<dbReference type="HOGENOM" id="CLU_100552_2_1_7"/>
<dbReference type="GO" id="GO:0005737">
    <property type="term" value="C:cytoplasm"/>
    <property type="evidence" value="ECO:0007669"/>
    <property type="project" value="UniProtKB-SubCell"/>
</dbReference>
<dbReference type="GO" id="GO:0070038">
    <property type="term" value="F:rRNA (pseudouridine-N3-)-methyltransferase activity"/>
    <property type="evidence" value="ECO:0007669"/>
    <property type="project" value="UniProtKB-UniRule"/>
</dbReference>
<dbReference type="CDD" id="cd18081">
    <property type="entry name" value="RlmH-like"/>
    <property type="match status" value="1"/>
</dbReference>
<dbReference type="Gene3D" id="3.40.1280.10">
    <property type="match status" value="1"/>
</dbReference>
<dbReference type="HAMAP" id="MF_00658">
    <property type="entry name" value="23SrRNA_methyltr_H"/>
    <property type="match status" value="1"/>
</dbReference>
<dbReference type="InterPro" id="IPR029028">
    <property type="entry name" value="Alpha/beta_knot_MTases"/>
</dbReference>
<dbReference type="InterPro" id="IPR003742">
    <property type="entry name" value="RlmH-like"/>
</dbReference>
<dbReference type="InterPro" id="IPR029026">
    <property type="entry name" value="tRNA_m1G_MTases_N"/>
</dbReference>
<dbReference type="NCBIfam" id="NF000987">
    <property type="entry name" value="PRK00103.2-1"/>
    <property type="match status" value="1"/>
</dbReference>
<dbReference type="PANTHER" id="PTHR33603">
    <property type="entry name" value="METHYLTRANSFERASE"/>
    <property type="match status" value="1"/>
</dbReference>
<dbReference type="PANTHER" id="PTHR33603:SF1">
    <property type="entry name" value="RIBOSOMAL RNA LARGE SUBUNIT METHYLTRANSFERASE H"/>
    <property type="match status" value="1"/>
</dbReference>
<dbReference type="Pfam" id="PF02590">
    <property type="entry name" value="SPOUT_MTase"/>
    <property type="match status" value="1"/>
</dbReference>
<dbReference type="PIRSF" id="PIRSF004505">
    <property type="entry name" value="MT_bac"/>
    <property type="match status" value="1"/>
</dbReference>
<dbReference type="SUPFAM" id="SSF75217">
    <property type="entry name" value="alpha/beta knot"/>
    <property type="match status" value="1"/>
</dbReference>
<organism>
    <name type="scientific">Helicobacter pylori (strain HPAG1)</name>
    <dbReference type="NCBI Taxonomy" id="357544"/>
    <lineage>
        <taxon>Bacteria</taxon>
        <taxon>Pseudomonadati</taxon>
        <taxon>Campylobacterota</taxon>
        <taxon>Epsilonproteobacteria</taxon>
        <taxon>Campylobacterales</taxon>
        <taxon>Helicobacteraceae</taxon>
        <taxon>Helicobacter</taxon>
    </lineage>
</organism>
<comment type="function">
    <text evidence="1">Specifically methylates the pseudouridine at position 1915 (m3Psi1915) in 23S rRNA.</text>
</comment>
<comment type="catalytic activity">
    <reaction evidence="1">
        <text>pseudouridine(1915) in 23S rRNA + S-adenosyl-L-methionine = N(3)-methylpseudouridine(1915) in 23S rRNA + S-adenosyl-L-homocysteine + H(+)</text>
        <dbReference type="Rhea" id="RHEA:42752"/>
        <dbReference type="Rhea" id="RHEA-COMP:10221"/>
        <dbReference type="Rhea" id="RHEA-COMP:10222"/>
        <dbReference type="ChEBI" id="CHEBI:15378"/>
        <dbReference type="ChEBI" id="CHEBI:57856"/>
        <dbReference type="ChEBI" id="CHEBI:59789"/>
        <dbReference type="ChEBI" id="CHEBI:65314"/>
        <dbReference type="ChEBI" id="CHEBI:74486"/>
        <dbReference type="EC" id="2.1.1.177"/>
    </reaction>
</comment>
<comment type="subunit">
    <text evidence="1">Homodimer.</text>
</comment>
<comment type="subcellular location">
    <subcellularLocation>
        <location evidence="1">Cytoplasm</location>
    </subcellularLocation>
</comment>
<comment type="similarity">
    <text evidence="1">Belongs to the RNA methyltransferase RlmH family.</text>
</comment>
<keyword id="KW-0963">Cytoplasm</keyword>
<keyword id="KW-0489">Methyltransferase</keyword>
<keyword id="KW-0698">rRNA processing</keyword>
<keyword id="KW-0949">S-adenosyl-L-methionine</keyword>
<keyword id="KW-0808">Transferase</keyword>
<feature type="chain" id="PRO_0000366607" description="Ribosomal RNA large subunit methyltransferase H">
    <location>
        <begin position="1"/>
        <end position="150"/>
    </location>
</feature>
<feature type="binding site" evidence="1">
    <location>
        <position position="100"/>
    </location>
    <ligand>
        <name>S-adenosyl-L-methionine</name>
        <dbReference type="ChEBI" id="CHEBI:59789"/>
    </ligand>
</feature>
<feature type="binding site" evidence="1">
    <location>
        <begin position="118"/>
        <end position="123"/>
    </location>
    <ligand>
        <name>S-adenosyl-L-methionine</name>
        <dbReference type="ChEBI" id="CHEBI:59789"/>
    </ligand>
</feature>
<proteinExistence type="inferred from homology"/>